<name>PYRB_BACMK</name>
<proteinExistence type="inferred from homology"/>
<protein>
    <recommendedName>
        <fullName evidence="1">Aspartate carbamoyltransferase catalytic subunit</fullName>
        <ecNumber evidence="1">2.1.3.2</ecNumber>
    </recommendedName>
    <alternativeName>
        <fullName evidence="1">Aspartate transcarbamylase</fullName>
        <shortName evidence="1">ATCase</shortName>
    </alternativeName>
</protein>
<keyword id="KW-0665">Pyrimidine biosynthesis</keyword>
<keyword id="KW-0808">Transferase</keyword>
<reference key="1">
    <citation type="journal article" date="2008" name="Chem. Biol. Interact.">
        <title>Extending the Bacillus cereus group genomics to putative food-borne pathogens of different toxicity.</title>
        <authorList>
            <person name="Lapidus A."/>
            <person name="Goltsman E."/>
            <person name="Auger S."/>
            <person name="Galleron N."/>
            <person name="Segurens B."/>
            <person name="Dossat C."/>
            <person name="Land M.L."/>
            <person name="Broussolle V."/>
            <person name="Brillard J."/>
            <person name="Guinebretiere M.-H."/>
            <person name="Sanchis V."/>
            <person name="Nguen-the C."/>
            <person name="Lereclus D."/>
            <person name="Richardson P."/>
            <person name="Wincker P."/>
            <person name="Weissenbach J."/>
            <person name="Ehrlich S.D."/>
            <person name="Sorokin A."/>
        </authorList>
    </citation>
    <scope>NUCLEOTIDE SEQUENCE [LARGE SCALE GENOMIC DNA]</scope>
    <source>
        <strain>KBAB4</strain>
    </source>
</reference>
<feature type="chain" id="PRO_1000088737" description="Aspartate carbamoyltransferase catalytic subunit">
    <location>
        <begin position="1"/>
        <end position="304"/>
    </location>
</feature>
<feature type="binding site" evidence="1">
    <location>
        <position position="49"/>
    </location>
    <ligand>
        <name>carbamoyl phosphate</name>
        <dbReference type="ChEBI" id="CHEBI:58228"/>
    </ligand>
</feature>
<feature type="binding site" evidence="1">
    <location>
        <position position="50"/>
    </location>
    <ligand>
        <name>carbamoyl phosphate</name>
        <dbReference type="ChEBI" id="CHEBI:58228"/>
    </ligand>
</feature>
<feature type="binding site" evidence="1">
    <location>
        <position position="77"/>
    </location>
    <ligand>
        <name>L-aspartate</name>
        <dbReference type="ChEBI" id="CHEBI:29991"/>
    </ligand>
</feature>
<feature type="binding site" evidence="1">
    <location>
        <position position="99"/>
    </location>
    <ligand>
        <name>carbamoyl phosphate</name>
        <dbReference type="ChEBI" id="CHEBI:58228"/>
    </ligand>
</feature>
<feature type="binding site" evidence="1">
    <location>
        <position position="127"/>
    </location>
    <ligand>
        <name>carbamoyl phosphate</name>
        <dbReference type="ChEBI" id="CHEBI:58228"/>
    </ligand>
</feature>
<feature type="binding site" evidence="1">
    <location>
        <position position="130"/>
    </location>
    <ligand>
        <name>carbamoyl phosphate</name>
        <dbReference type="ChEBI" id="CHEBI:58228"/>
    </ligand>
</feature>
<feature type="binding site" evidence="1">
    <location>
        <position position="160"/>
    </location>
    <ligand>
        <name>L-aspartate</name>
        <dbReference type="ChEBI" id="CHEBI:29991"/>
    </ligand>
</feature>
<feature type="binding site" evidence="1">
    <location>
        <position position="211"/>
    </location>
    <ligand>
        <name>L-aspartate</name>
        <dbReference type="ChEBI" id="CHEBI:29991"/>
    </ligand>
</feature>
<feature type="binding site" evidence="1">
    <location>
        <position position="252"/>
    </location>
    <ligand>
        <name>carbamoyl phosphate</name>
        <dbReference type="ChEBI" id="CHEBI:58228"/>
    </ligand>
</feature>
<feature type="binding site" evidence="1">
    <location>
        <position position="253"/>
    </location>
    <ligand>
        <name>carbamoyl phosphate</name>
        <dbReference type="ChEBI" id="CHEBI:58228"/>
    </ligand>
</feature>
<gene>
    <name evidence="1" type="primary">pyrB</name>
    <name type="ordered locus">BcerKBAB4_3716</name>
</gene>
<accession>A9VTC9</accession>
<organism>
    <name type="scientific">Bacillus mycoides (strain KBAB4)</name>
    <name type="common">Bacillus weihenstephanensis</name>
    <dbReference type="NCBI Taxonomy" id="315730"/>
    <lineage>
        <taxon>Bacteria</taxon>
        <taxon>Bacillati</taxon>
        <taxon>Bacillota</taxon>
        <taxon>Bacilli</taxon>
        <taxon>Bacillales</taxon>
        <taxon>Bacillaceae</taxon>
        <taxon>Bacillus</taxon>
        <taxon>Bacillus cereus group</taxon>
    </lineage>
</organism>
<dbReference type="EC" id="2.1.3.2" evidence="1"/>
<dbReference type="EMBL" id="CP000903">
    <property type="protein sequence ID" value="ABY44885.1"/>
    <property type="molecule type" value="Genomic_DNA"/>
</dbReference>
<dbReference type="RefSeq" id="WP_002128846.1">
    <property type="nucleotide sequence ID" value="NC_010184.1"/>
</dbReference>
<dbReference type="SMR" id="A9VTC9"/>
<dbReference type="KEGG" id="bwe:BcerKBAB4_3716"/>
<dbReference type="eggNOG" id="COG0540">
    <property type="taxonomic scope" value="Bacteria"/>
</dbReference>
<dbReference type="HOGENOM" id="CLU_043846_2_1_9"/>
<dbReference type="UniPathway" id="UPA00070">
    <property type="reaction ID" value="UER00116"/>
</dbReference>
<dbReference type="Proteomes" id="UP000002154">
    <property type="component" value="Chromosome"/>
</dbReference>
<dbReference type="GO" id="GO:0005829">
    <property type="term" value="C:cytosol"/>
    <property type="evidence" value="ECO:0007669"/>
    <property type="project" value="TreeGrafter"/>
</dbReference>
<dbReference type="GO" id="GO:0016597">
    <property type="term" value="F:amino acid binding"/>
    <property type="evidence" value="ECO:0007669"/>
    <property type="project" value="InterPro"/>
</dbReference>
<dbReference type="GO" id="GO:0004070">
    <property type="term" value="F:aspartate carbamoyltransferase activity"/>
    <property type="evidence" value="ECO:0007669"/>
    <property type="project" value="UniProtKB-UniRule"/>
</dbReference>
<dbReference type="GO" id="GO:0006207">
    <property type="term" value="P:'de novo' pyrimidine nucleobase biosynthetic process"/>
    <property type="evidence" value="ECO:0007669"/>
    <property type="project" value="InterPro"/>
</dbReference>
<dbReference type="GO" id="GO:0044205">
    <property type="term" value="P:'de novo' UMP biosynthetic process"/>
    <property type="evidence" value="ECO:0007669"/>
    <property type="project" value="UniProtKB-UniRule"/>
</dbReference>
<dbReference type="GO" id="GO:0006520">
    <property type="term" value="P:amino acid metabolic process"/>
    <property type="evidence" value="ECO:0007669"/>
    <property type="project" value="InterPro"/>
</dbReference>
<dbReference type="FunFam" id="3.40.50.1370:FF:000001">
    <property type="entry name" value="Aspartate carbamoyltransferase"/>
    <property type="match status" value="1"/>
</dbReference>
<dbReference type="FunFam" id="3.40.50.1370:FF:000011">
    <property type="entry name" value="Aspartate carbamoyltransferase"/>
    <property type="match status" value="1"/>
</dbReference>
<dbReference type="Gene3D" id="3.40.50.1370">
    <property type="entry name" value="Aspartate/ornithine carbamoyltransferase"/>
    <property type="match status" value="2"/>
</dbReference>
<dbReference type="HAMAP" id="MF_00001">
    <property type="entry name" value="Asp_carb_tr"/>
    <property type="match status" value="1"/>
</dbReference>
<dbReference type="InterPro" id="IPR006132">
    <property type="entry name" value="Asp/Orn_carbamoyltranf_P-bd"/>
</dbReference>
<dbReference type="InterPro" id="IPR006130">
    <property type="entry name" value="Asp/Orn_carbamoylTrfase"/>
</dbReference>
<dbReference type="InterPro" id="IPR036901">
    <property type="entry name" value="Asp/Orn_carbamoylTrfase_sf"/>
</dbReference>
<dbReference type="InterPro" id="IPR002082">
    <property type="entry name" value="Asp_carbamoyltransf"/>
</dbReference>
<dbReference type="InterPro" id="IPR006131">
    <property type="entry name" value="Asp_carbamoyltransf_Asp/Orn-bd"/>
</dbReference>
<dbReference type="NCBIfam" id="TIGR00670">
    <property type="entry name" value="asp_carb_tr"/>
    <property type="match status" value="1"/>
</dbReference>
<dbReference type="NCBIfam" id="NF002032">
    <property type="entry name" value="PRK00856.1"/>
    <property type="match status" value="1"/>
</dbReference>
<dbReference type="PANTHER" id="PTHR45753:SF6">
    <property type="entry name" value="ASPARTATE CARBAMOYLTRANSFERASE"/>
    <property type="match status" value="1"/>
</dbReference>
<dbReference type="PANTHER" id="PTHR45753">
    <property type="entry name" value="ORNITHINE CARBAMOYLTRANSFERASE, MITOCHONDRIAL"/>
    <property type="match status" value="1"/>
</dbReference>
<dbReference type="Pfam" id="PF00185">
    <property type="entry name" value="OTCace"/>
    <property type="match status" value="1"/>
</dbReference>
<dbReference type="Pfam" id="PF02729">
    <property type="entry name" value="OTCace_N"/>
    <property type="match status" value="1"/>
</dbReference>
<dbReference type="PRINTS" id="PR00100">
    <property type="entry name" value="AOTCASE"/>
</dbReference>
<dbReference type="PRINTS" id="PR00101">
    <property type="entry name" value="ATCASE"/>
</dbReference>
<dbReference type="SUPFAM" id="SSF53671">
    <property type="entry name" value="Aspartate/ornithine carbamoyltransferase"/>
    <property type="match status" value="1"/>
</dbReference>
<dbReference type="PROSITE" id="PS00097">
    <property type="entry name" value="CARBAMOYLTRANSFERASE"/>
    <property type="match status" value="1"/>
</dbReference>
<sequence>MSHLLTMSELSEQEISEILKDAEDFANGKERKTTEQTFVANLFFENSTRTRFSFEVAEKRLGLEVLDFSADASSVQKGETLYDTIRTLESIGTKAVVIRHEQDRYFDELKDQVNIPILNAGDGCGNHPTQCLLDLLTIKQEFGRFEGLKIAIVGDVRHSRVARSNAEALTKLGATIYFASPEEWKDEENTFGTYKSLDELVPEVDVMMLLRVQHERHDHYETDIMKEYHEQHGLTVEREKRMKEGSIIMHPAPVNRDVEIASELVECERSRIFKQMENGVYVRMAVLKRALPNVLGGMKHELFV</sequence>
<evidence type="ECO:0000255" key="1">
    <source>
        <dbReference type="HAMAP-Rule" id="MF_00001"/>
    </source>
</evidence>
<comment type="function">
    <text evidence="1">Catalyzes the condensation of carbamoyl phosphate and aspartate to form carbamoyl aspartate and inorganic phosphate, the committed step in the de novo pyrimidine nucleotide biosynthesis pathway.</text>
</comment>
<comment type="catalytic activity">
    <reaction evidence="1">
        <text>carbamoyl phosphate + L-aspartate = N-carbamoyl-L-aspartate + phosphate + H(+)</text>
        <dbReference type="Rhea" id="RHEA:20013"/>
        <dbReference type="ChEBI" id="CHEBI:15378"/>
        <dbReference type="ChEBI" id="CHEBI:29991"/>
        <dbReference type="ChEBI" id="CHEBI:32814"/>
        <dbReference type="ChEBI" id="CHEBI:43474"/>
        <dbReference type="ChEBI" id="CHEBI:58228"/>
        <dbReference type="EC" id="2.1.3.2"/>
    </reaction>
</comment>
<comment type="pathway">
    <text evidence="1">Pyrimidine metabolism; UMP biosynthesis via de novo pathway; (S)-dihydroorotate from bicarbonate: step 2/3.</text>
</comment>
<comment type="subunit">
    <text evidence="1">Heterododecamer (2C3:3R2) of six catalytic PyrB chains organized as two trimers (C3), and six regulatory PyrI chains organized as three dimers (R2).</text>
</comment>
<comment type="similarity">
    <text evidence="1">Belongs to the aspartate/ornithine carbamoyltransferase superfamily. ATCase family.</text>
</comment>